<gene>
    <name type="primary">gdap2</name>
    <name type="ORF">DDB_G0284349</name>
</gene>
<accession>Q54PT1</accession>
<organism>
    <name type="scientific">Dictyostelium discoideum</name>
    <name type="common">Social amoeba</name>
    <dbReference type="NCBI Taxonomy" id="44689"/>
    <lineage>
        <taxon>Eukaryota</taxon>
        <taxon>Amoebozoa</taxon>
        <taxon>Evosea</taxon>
        <taxon>Eumycetozoa</taxon>
        <taxon>Dictyostelia</taxon>
        <taxon>Dictyosteliales</taxon>
        <taxon>Dictyosteliaceae</taxon>
        <taxon>Dictyostelium</taxon>
    </lineage>
</organism>
<protein>
    <recommendedName>
        <fullName>Protein GDAP2 homolog</fullName>
    </recommendedName>
</protein>
<dbReference type="EMBL" id="AAFI02000064">
    <property type="protein sequence ID" value="EAL65223.1"/>
    <property type="molecule type" value="Genomic_DNA"/>
</dbReference>
<dbReference type="RefSeq" id="XP_638573.1">
    <property type="nucleotide sequence ID" value="XM_633481.1"/>
</dbReference>
<dbReference type="SMR" id="Q54PT1"/>
<dbReference type="FunCoup" id="Q54PT1">
    <property type="interactions" value="13"/>
</dbReference>
<dbReference type="STRING" id="44689.Q54PT1"/>
<dbReference type="PaxDb" id="44689-DDB0237523"/>
<dbReference type="EnsemblProtists" id="EAL65223">
    <property type="protein sequence ID" value="EAL65223"/>
    <property type="gene ID" value="DDB_G0284349"/>
</dbReference>
<dbReference type="GeneID" id="8624545"/>
<dbReference type="KEGG" id="ddi:DDB_G0284349"/>
<dbReference type="dictyBase" id="DDB_G0284349">
    <property type="gene designation" value="gdap2"/>
</dbReference>
<dbReference type="VEuPathDB" id="AmoebaDB:DDB_G0284349"/>
<dbReference type="eggNOG" id="KOG2633">
    <property type="taxonomic scope" value="Eukaryota"/>
</dbReference>
<dbReference type="HOGENOM" id="CLU_026877_0_0_1"/>
<dbReference type="InParanoid" id="Q54PT1"/>
<dbReference type="OMA" id="IHPTFWT"/>
<dbReference type="PhylomeDB" id="Q54PT1"/>
<dbReference type="PRO" id="PR:Q54PT1"/>
<dbReference type="Proteomes" id="UP000002195">
    <property type="component" value="Chromosome 4"/>
</dbReference>
<dbReference type="CDD" id="cd02905">
    <property type="entry name" value="Macro_GDAP2-like"/>
    <property type="match status" value="1"/>
</dbReference>
<dbReference type="CDD" id="cd00170">
    <property type="entry name" value="SEC14"/>
    <property type="match status" value="1"/>
</dbReference>
<dbReference type="Gene3D" id="3.40.525.10">
    <property type="entry name" value="CRAL-TRIO lipid binding domain"/>
    <property type="match status" value="1"/>
</dbReference>
<dbReference type="Gene3D" id="3.40.220.10">
    <property type="entry name" value="Leucine Aminopeptidase, subunit E, domain 1"/>
    <property type="match status" value="1"/>
</dbReference>
<dbReference type="InterPro" id="IPR001251">
    <property type="entry name" value="CRAL-TRIO_dom"/>
</dbReference>
<dbReference type="InterPro" id="IPR036865">
    <property type="entry name" value="CRAL-TRIO_dom_sf"/>
</dbReference>
<dbReference type="InterPro" id="IPR002589">
    <property type="entry name" value="Macro_dom"/>
</dbReference>
<dbReference type="InterPro" id="IPR043472">
    <property type="entry name" value="Macro_dom-like"/>
</dbReference>
<dbReference type="InterPro" id="IPR035793">
    <property type="entry name" value="Macro_GDAP2"/>
</dbReference>
<dbReference type="PANTHER" id="PTHR11106">
    <property type="entry name" value="GANGLIOSIDE INDUCED DIFFERENTIATION ASSOCIATED PROTEIN 2-RELATED"/>
    <property type="match status" value="1"/>
</dbReference>
<dbReference type="PANTHER" id="PTHR11106:SF72">
    <property type="entry name" value="GANGLIOSIDE-INDUCED DIFFERENTIATION-ASSOCIATED PROTEIN 2"/>
    <property type="match status" value="1"/>
</dbReference>
<dbReference type="Pfam" id="PF13716">
    <property type="entry name" value="CRAL_TRIO_2"/>
    <property type="match status" value="1"/>
</dbReference>
<dbReference type="Pfam" id="PF01661">
    <property type="entry name" value="Macro"/>
    <property type="match status" value="1"/>
</dbReference>
<dbReference type="SUPFAM" id="SSF52087">
    <property type="entry name" value="CRAL/TRIO domain"/>
    <property type="match status" value="1"/>
</dbReference>
<dbReference type="SUPFAM" id="SSF52949">
    <property type="entry name" value="Macro domain-like"/>
    <property type="match status" value="1"/>
</dbReference>
<dbReference type="PROSITE" id="PS50191">
    <property type="entry name" value="CRAL_TRIO"/>
    <property type="match status" value="1"/>
</dbReference>
<dbReference type="PROSITE" id="PS51154">
    <property type="entry name" value="MACRO"/>
    <property type="match status" value="1"/>
</dbReference>
<sequence>MTTTPIFSGKIDYKEIKTWDQTEFDEKNLVNDKDKVPIENFHINGPIQFKIDTEINSRICLWMGDICNLNTDTIVYSNSKTLTESDTISDKIFKYGGSEMMNDIQKNGECRYGESIITSGGNLPSRFVVHTVCPTYNPKYLSAAENALNSCYRSAFHLSMDVKSKSISFSTLHSEKRQFPSVGGCHIALRTIRRFLEKPFSKSFEKVILAINTFEDLRLYEQMLPIYFPRNQQELKFSQISLPKDVGDENGEAIVESRKIRIIETPSTIIREPEDYNCFYSNNNNNNNNVNNVNNNNSNNNNSNNNNSSSNNIDIIQKNNKNEFNNYKYDSIDKILNPFSSNFSSSPYDATMDNDSFMLKREDPDIEKRRQFSKKSEKQIENEKLKAQFQTLLTRSKVEDLSDVSRLNFTLQTTDDQNRPIVVIIGSQLNSRKDLYDQVLLYLIRVLEQTIQRGNFSIIYFHSNMSSQQSPDLSWLKKLLEIFELKYNNYLKDFNIVHPTFLLKTTLFISKSILGDKGVLSKIIYHENMNKISKLISKCNIPKSIFSYEFSKNEIDNFSFSFDNDVTL</sequence>
<name>GDAP2_DICDI</name>
<comment type="similarity">
    <text evidence="4">Belongs to the GDAP2 family.</text>
</comment>
<proteinExistence type="inferred from homology"/>
<feature type="chain" id="PRO_0000331403" description="Protein GDAP2 homolog">
    <location>
        <begin position="1"/>
        <end position="568"/>
    </location>
</feature>
<feature type="domain" description="Macro" evidence="2">
    <location>
        <begin position="46"/>
        <end position="228"/>
    </location>
</feature>
<feature type="domain" description="CRAL-TRIO" evidence="1">
    <location>
        <begin position="397"/>
        <end position="553"/>
    </location>
</feature>
<feature type="region of interest" description="Disordered" evidence="3">
    <location>
        <begin position="281"/>
        <end position="313"/>
    </location>
</feature>
<reference key="1">
    <citation type="journal article" date="2005" name="Nature">
        <title>The genome of the social amoeba Dictyostelium discoideum.</title>
        <authorList>
            <person name="Eichinger L."/>
            <person name="Pachebat J.A."/>
            <person name="Gloeckner G."/>
            <person name="Rajandream M.A."/>
            <person name="Sucgang R."/>
            <person name="Berriman M."/>
            <person name="Song J."/>
            <person name="Olsen R."/>
            <person name="Szafranski K."/>
            <person name="Xu Q."/>
            <person name="Tunggal B."/>
            <person name="Kummerfeld S."/>
            <person name="Madera M."/>
            <person name="Konfortov B.A."/>
            <person name="Rivero F."/>
            <person name="Bankier A.T."/>
            <person name="Lehmann R."/>
            <person name="Hamlin N."/>
            <person name="Davies R."/>
            <person name="Gaudet P."/>
            <person name="Fey P."/>
            <person name="Pilcher K."/>
            <person name="Chen G."/>
            <person name="Saunders D."/>
            <person name="Sodergren E.J."/>
            <person name="Davis P."/>
            <person name="Kerhornou A."/>
            <person name="Nie X."/>
            <person name="Hall N."/>
            <person name="Anjard C."/>
            <person name="Hemphill L."/>
            <person name="Bason N."/>
            <person name="Farbrother P."/>
            <person name="Desany B."/>
            <person name="Just E."/>
            <person name="Morio T."/>
            <person name="Rost R."/>
            <person name="Churcher C.M."/>
            <person name="Cooper J."/>
            <person name="Haydock S."/>
            <person name="van Driessche N."/>
            <person name="Cronin A."/>
            <person name="Goodhead I."/>
            <person name="Muzny D.M."/>
            <person name="Mourier T."/>
            <person name="Pain A."/>
            <person name="Lu M."/>
            <person name="Harper D."/>
            <person name="Lindsay R."/>
            <person name="Hauser H."/>
            <person name="James K.D."/>
            <person name="Quiles M."/>
            <person name="Madan Babu M."/>
            <person name="Saito T."/>
            <person name="Buchrieser C."/>
            <person name="Wardroper A."/>
            <person name="Felder M."/>
            <person name="Thangavelu M."/>
            <person name="Johnson D."/>
            <person name="Knights A."/>
            <person name="Loulseged H."/>
            <person name="Mungall K.L."/>
            <person name="Oliver K."/>
            <person name="Price C."/>
            <person name="Quail M.A."/>
            <person name="Urushihara H."/>
            <person name="Hernandez J."/>
            <person name="Rabbinowitsch E."/>
            <person name="Steffen D."/>
            <person name="Sanders M."/>
            <person name="Ma J."/>
            <person name="Kohara Y."/>
            <person name="Sharp S."/>
            <person name="Simmonds M.N."/>
            <person name="Spiegler S."/>
            <person name="Tivey A."/>
            <person name="Sugano S."/>
            <person name="White B."/>
            <person name="Walker D."/>
            <person name="Woodward J.R."/>
            <person name="Winckler T."/>
            <person name="Tanaka Y."/>
            <person name="Shaulsky G."/>
            <person name="Schleicher M."/>
            <person name="Weinstock G.M."/>
            <person name="Rosenthal A."/>
            <person name="Cox E.C."/>
            <person name="Chisholm R.L."/>
            <person name="Gibbs R.A."/>
            <person name="Loomis W.F."/>
            <person name="Platzer M."/>
            <person name="Kay R.R."/>
            <person name="Williams J.G."/>
            <person name="Dear P.H."/>
            <person name="Noegel A.A."/>
            <person name="Barrell B.G."/>
            <person name="Kuspa A."/>
        </authorList>
    </citation>
    <scope>NUCLEOTIDE SEQUENCE [LARGE SCALE GENOMIC DNA]</scope>
    <source>
        <strain>AX4</strain>
    </source>
</reference>
<evidence type="ECO:0000255" key="1">
    <source>
        <dbReference type="PROSITE-ProRule" id="PRU00056"/>
    </source>
</evidence>
<evidence type="ECO:0000255" key="2">
    <source>
        <dbReference type="PROSITE-ProRule" id="PRU00490"/>
    </source>
</evidence>
<evidence type="ECO:0000256" key="3">
    <source>
        <dbReference type="SAM" id="MobiDB-lite"/>
    </source>
</evidence>
<evidence type="ECO:0000305" key="4"/>
<keyword id="KW-1185">Reference proteome</keyword>